<accession>Q9SJA9</accession>
<evidence type="ECO:0000250" key="1"/>
<evidence type="ECO:0000255" key="2"/>
<evidence type="ECO:0000305" key="3"/>
<name>GDL39_ARATH</name>
<gene>
    <name type="ordered locus">At2g24560</name>
    <name type="ORF">F25P17.14</name>
</gene>
<organism>
    <name type="scientific">Arabidopsis thaliana</name>
    <name type="common">Mouse-ear cress</name>
    <dbReference type="NCBI Taxonomy" id="3702"/>
    <lineage>
        <taxon>Eukaryota</taxon>
        <taxon>Viridiplantae</taxon>
        <taxon>Streptophyta</taxon>
        <taxon>Embryophyta</taxon>
        <taxon>Tracheophyta</taxon>
        <taxon>Spermatophyta</taxon>
        <taxon>Magnoliopsida</taxon>
        <taxon>eudicotyledons</taxon>
        <taxon>Gunneridae</taxon>
        <taxon>Pentapetalae</taxon>
        <taxon>rosids</taxon>
        <taxon>malvids</taxon>
        <taxon>Brassicales</taxon>
        <taxon>Brassicaceae</taxon>
        <taxon>Camelineae</taxon>
        <taxon>Arabidopsis</taxon>
    </lineage>
</organism>
<keyword id="KW-0325">Glycoprotein</keyword>
<keyword id="KW-0378">Hydrolase</keyword>
<keyword id="KW-0442">Lipid degradation</keyword>
<keyword id="KW-0443">Lipid metabolism</keyword>
<keyword id="KW-1185">Reference proteome</keyword>
<keyword id="KW-0964">Secreted</keyword>
<keyword id="KW-0732">Signal</keyword>
<protein>
    <recommendedName>
        <fullName>GDSL esterase/lipase At2g24560</fullName>
        <ecNumber>3.1.1.-</ecNumber>
    </recommendedName>
    <alternativeName>
        <fullName>Extracellular lipase At2g24560</fullName>
    </alternativeName>
</protein>
<proteinExistence type="evidence at transcript level"/>
<reference key="1">
    <citation type="journal article" date="1999" name="Nature">
        <title>Sequence and analysis of chromosome 2 of the plant Arabidopsis thaliana.</title>
        <authorList>
            <person name="Lin X."/>
            <person name="Kaul S."/>
            <person name="Rounsley S.D."/>
            <person name="Shea T.P."/>
            <person name="Benito M.-I."/>
            <person name="Town C.D."/>
            <person name="Fujii C.Y."/>
            <person name="Mason T.M."/>
            <person name="Bowman C.L."/>
            <person name="Barnstead M.E."/>
            <person name="Feldblyum T.V."/>
            <person name="Buell C.R."/>
            <person name="Ketchum K.A."/>
            <person name="Lee J.J."/>
            <person name="Ronning C.M."/>
            <person name="Koo H.L."/>
            <person name="Moffat K.S."/>
            <person name="Cronin L.A."/>
            <person name="Shen M."/>
            <person name="Pai G."/>
            <person name="Van Aken S."/>
            <person name="Umayam L."/>
            <person name="Tallon L.J."/>
            <person name="Gill J.E."/>
            <person name="Adams M.D."/>
            <person name="Carrera A.J."/>
            <person name="Creasy T.H."/>
            <person name="Goodman H.M."/>
            <person name="Somerville C.R."/>
            <person name="Copenhaver G.P."/>
            <person name="Preuss D."/>
            <person name="Nierman W.C."/>
            <person name="White O."/>
            <person name="Eisen J.A."/>
            <person name="Salzberg S.L."/>
            <person name="Fraser C.M."/>
            <person name="Venter J.C."/>
        </authorList>
    </citation>
    <scope>NUCLEOTIDE SEQUENCE [LARGE SCALE GENOMIC DNA]</scope>
    <source>
        <strain>cv. Columbia</strain>
    </source>
</reference>
<reference key="2">
    <citation type="journal article" date="2017" name="Plant J.">
        <title>Araport11: a complete reannotation of the Arabidopsis thaliana reference genome.</title>
        <authorList>
            <person name="Cheng C.Y."/>
            <person name="Krishnakumar V."/>
            <person name="Chan A.P."/>
            <person name="Thibaud-Nissen F."/>
            <person name="Schobel S."/>
            <person name="Town C.D."/>
        </authorList>
    </citation>
    <scope>GENOME REANNOTATION</scope>
    <source>
        <strain>cv. Columbia</strain>
    </source>
</reference>
<reference key="3">
    <citation type="submission" date="2005-09" db="EMBL/GenBank/DDBJ databases">
        <authorList>
            <consortium name="Center for eukaryotic structural genomics (CESG)"/>
        </authorList>
    </citation>
    <scope>NUCLEOTIDE SEQUENCE [LARGE SCALE MRNA] OF 23-349</scope>
</reference>
<reference key="4">
    <citation type="journal article" date="2004" name="Prog. Lipid Res.">
        <title>GDSL family of serine esterases/lipases.</title>
        <authorList>
            <person name="Akoh C.C."/>
            <person name="Lee G.-C."/>
            <person name="Liaw Y.-C."/>
            <person name="Huang T.-H."/>
            <person name="Shaw J.-F."/>
        </authorList>
    </citation>
    <scope>REVIEW</scope>
</reference>
<reference key="5">
    <citation type="journal article" date="2008" name="Pak. J. Biol. Sci.">
        <title>Sequence analysis of GDSL lipase gene family in Arabidopsis thaliana.</title>
        <authorList>
            <person name="Ling H."/>
        </authorList>
    </citation>
    <scope>GENE FAMILY</scope>
</reference>
<feature type="signal peptide" evidence="2">
    <location>
        <begin position="1"/>
        <end position="22"/>
    </location>
</feature>
<feature type="chain" id="PRO_0000367380" description="GDSL esterase/lipase At2g24560">
    <location>
        <begin position="23"/>
        <end position="363"/>
    </location>
</feature>
<feature type="active site" description="Nucleophile" evidence="1">
    <location>
        <position position="41"/>
    </location>
</feature>
<feature type="active site" evidence="1">
    <location>
        <position position="333"/>
    </location>
</feature>
<feature type="active site" evidence="1">
    <location>
        <position position="336"/>
    </location>
</feature>
<feature type="glycosylation site" description="N-linked (GlcNAc...) asparagine" evidence="2">
    <location>
        <position position="25"/>
    </location>
</feature>
<feature type="glycosylation site" description="N-linked (GlcNAc...) asparagine" evidence="2">
    <location>
        <position position="103"/>
    </location>
</feature>
<feature type="glycosylation site" description="N-linked (GlcNAc...) asparagine" evidence="2">
    <location>
        <position position="325"/>
    </location>
</feature>
<sequence length="363" mass="40815">MSTSKTITFTLFIAALLSSCDAATNATSQPLFPAILIFGDSTVDTGNNNYHSQTIFKAKHLPYGIDLPNHKASGRFTNGKIFSDIIATKLNIKQFVPPFLQPNLSDQEIVTGVCFASAGAGYDDHTSLSTQAIRVLDQQKMFKNYIARLKSIVGDKKAMEIIKNALVVISAGPNDFILNYYDIPSRRLEFPHISGYQDFVLQRLDNFVRELYSLGCRKIMVGGLPPMGCLPIQMTAKFRNALRFCLEQENRDSVLYNQKLQNLLPQIEASLTGSKILYSNVYDPMMDMMQNPSKYGFKETKRGCCGTGHLETSFMCNAFSPTCRNHSEFLFFDSIHPSEATYNYMGNFLDTQIRVWLSLRLKS</sequence>
<comment type="subcellular location">
    <subcellularLocation>
        <location evidence="3">Secreted</location>
    </subcellularLocation>
</comment>
<comment type="similarity">
    <text evidence="3">Belongs to the 'GDSL' lipolytic enzyme family.</text>
</comment>
<comment type="sequence caution" evidence="3">
    <conflict type="erroneous gene model prediction">
        <sequence resource="EMBL-CDS" id="AAD23897"/>
    </conflict>
</comment>
<dbReference type="EC" id="3.1.1.-"/>
<dbReference type="EMBL" id="AC006954">
    <property type="protein sequence ID" value="AAD23897.1"/>
    <property type="status" value="ALT_SEQ"/>
    <property type="molecule type" value="Genomic_DNA"/>
</dbReference>
<dbReference type="EMBL" id="CP002685">
    <property type="protein sequence ID" value="AEC07592.1"/>
    <property type="molecule type" value="Genomic_DNA"/>
</dbReference>
<dbReference type="EMBL" id="BT015551">
    <property type="status" value="NOT_ANNOTATED_CDS"/>
    <property type="molecule type" value="mRNA"/>
</dbReference>
<dbReference type="PIR" id="B84638">
    <property type="entry name" value="B84638"/>
</dbReference>
<dbReference type="RefSeq" id="NP_180032.2">
    <property type="nucleotide sequence ID" value="NM_128017.3"/>
</dbReference>
<dbReference type="SMR" id="Q9SJA9"/>
<dbReference type="FunCoup" id="Q9SJA9">
    <property type="interactions" value="113"/>
</dbReference>
<dbReference type="STRING" id="3702.Q9SJA9"/>
<dbReference type="GlyGen" id="Q9SJA9">
    <property type="glycosylation" value="3 sites"/>
</dbReference>
<dbReference type="PaxDb" id="3702-AT2G24560.1"/>
<dbReference type="ProteomicsDB" id="224756"/>
<dbReference type="EnsemblPlants" id="AT2G24560.1">
    <property type="protein sequence ID" value="AT2G24560.1"/>
    <property type="gene ID" value="AT2G24560"/>
</dbReference>
<dbReference type="GeneID" id="816992"/>
<dbReference type="Gramene" id="AT2G24560.1">
    <property type="protein sequence ID" value="AT2G24560.1"/>
    <property type="gene ID" value="AT2G24560"/>
</dbReference>
<dbReference type="KEGG" id="ath:AT2G24560"/>
<dbReference type="Araport" id="AT2G24560"/>
<dbReference type="TAIR" id="AT2G24560"/>
<dbReference type="eggNOG" id="ENOG502QSNM">
    <property type="taxonomic scope" value="Eukaryota"/>
</dbReference>
<dbReference type="HOGENOM" id="CLU_015101_0_1_1"/>
<dbReference type="InParanoid" id="Q9SJA9"/>
<dbReference type="OMA" id="SLMFINA"/>
<dbReference type="PhylomeDB" id="Q9SJA9"/>
<dbReference type="BioCyc" id="ARA:AT2G24560-MONOMER"/>
<dbReference type="PRO" id="PR:Q9SJA9"/>
<dbReference type="Proteomes" id="UP000006548">
    <property type="component" value="Chromosome 2"/>
</dbReference>
<dbReference type="ExpressionAtlas" id="Q9SJA9">
    <property type="expression patterns" value="baseline and differential"/>
</dbReference>
<dbReference type="GO" id="GO:0005576">
    <property type="term" value="C:extracellular region"/>
    <property type="evidence" value="ECO:0007669"/>
    <property type="project" value="UniProtKB-SubCell"/>
</dbReference>
<dbReference type="GO" id="GO:0016788">
    <property type="term" value="F:hydrolase activity, acting on ester bonds"/>
    <property type="evidence" value="ECO:0007669"/>
    <property type="project" value="InterPro"/>
</dbReference>
<dbReference type="GO" id="GO:0016042">
    <property type="term" value="P:lipid catabolic process"/>
    <property type="evidence" value="ECO:0007669"/>
    <property type="project" value="UniProtKB-KW"/>
</dbReference>
<dbReference type="CDD" id="cd01837">
    <property type="entry name" value="SGNH_plant_lipase_like"/>
    <property type="match status" value="1"/>
</dbReference>
<dbReference type="FunFam" id="3.40.50.1110:FF:000003">
    <property type="entry name" value="GDSL esterase/lipase APG"/>
    <property type="match status" value="1"/>
</dbReference>
<dbReference type="Gene3D" id="3.40.50.1110">
    <property type="entry name" value="SGNH hydrolase"/>
    <property type="match status" value="1"/>
</dbReference>
<dbReference type="InterPro" id="IPR001087">
    <property type="entry name" value="GDSL"/>
</dbReference>
<dbReference type="InterPro" id="IPR050592">
    <property type="entry name" value="GDSL_lipolytic_enzyme"/>
</dbReference>
<dbReference type="InterPro" id="IPR036514">
    <property type="entry name" value="SGNH_hydro_sf"/>
</dbReference>
<dbReference type="InterPro" id="IPR035669">
    <property type="entry name" value="SGNH_plant_lipase-like"/>
</dbReference>
<dbReference type="PANTHER" id="PTHR45642">
    <property type="entry name" value="GDSL ESTERASE/LIPASE EXL3"/>
    <property type="match status" value="1"/>
</dbReference>
<dbReference type="PANTHER" id="PTHR45642:SF30">
    <property type="entry name" value="SGNH HYDROLASE-TYPE ESTERASE DOMAIN-CONTAINING PROTEIN"/>
    <property type="match status" value="1"/>
</dbReference>
<dbReference type="Pfam" id="PF00657">
    <property type="entry name" value="Lipase_GDSL"/>
    <property type="match status" value="1"/>
</dbReference>
<dbReference type="SUPFAM" id="SSF52266">
    <property type="entry name" value="SGNH hydrolase"/>
    <property type="match status" value="1"/>
</dbReference>